<proteinExistence type="inferred from homology"/>
<feature type="chain" id="PRO_0000348813" description="tRNA-cytidine(32) 2-sulfurtransferase">
    <location>
        <begin position="1"/>
        <end position="312"/>
    </location>
</feature>
<feature type="short sequence motif" description="PP-loop motif" evidence="1">
    <location>
        <begin position="39"/>
        <end position="44"/>
    </location>
</feature>
<feature type="binding site" evidence="1">
    <location>
        <position position="114"/>
    </location>
    <ligand>
        <name>[4Fe-4S] cluster</name>
        <dbReference type="ChEBI" id="CHEBI:49883"/>
    </ligand>
</feature>
<feature type="binding site" evidence="1">
    <location>
        <position position="117"/>
    </location>
    <ligand>
        <name>[4Fe-4S] cluster</name>
        <dbReference type="ChEBI" id="CHEBI:49883"/>
    </ligand>
</feature>
<feature type="binding site" evidence="1">
    <location>
        <position position="205"/>
    </location>
    <ligand>
        <name>[4Fe-4S] cluster</name>
        <dbReference type="ChEBI" id="CHEBI:49883"/>
    </ligand>
</feature>
<reference key="1">
    <citation type="journal article" date="2002" name="Nature">
        <title>Genome sequence of the plant pathogen Ralstonia solanacearum.</title>
        <authorList>
            <person name="Salanoubat M."/>
            <person name="Genin S."/>
            <person name="Artiguenave F."/>
            <person name="Gouzy J."/>
            <person name="Mangenot S."/>
            <person name="Arlat M."/>
            <person name="Billault A."/>
            <person name="Brottier P."/>
            <person name="Camus J.-C."/>
            <person name="Cattolico L."/>
            <person name="Chandler M."/>
            <person name="Choisne N."/>
            <person name="Claudel-Renard C."/>
            <person name="Cunnac S."/>
            <person name="Demange N."/>
            <person name="Gaspin C."/>
            <person name="Lavie M."/>
            <person name="Moisan A."/>
            <person name="Robert C."/>
            <person name="Saurin W."/>
            <person name="Schiex T."/>
            <person name="Siguier P."/>
            <person name="Thebault P."/>
            <person name="Whalen M."/>
            <person name="Wincker P."/>
            <person name="Levy M."/>
            <person name="Weissenbach J."/>
            <person name="Boucher C.A."/>
        </authorList>
    </citation>
    <scope>NUCLEOTIDE SEQUENCE [LARGE SCALE GENOMIC DNA]</scope>
    <source>
        <strain>ATCC BAA-1114 / GMI1000</strain>
    </source>
</reference>
<evidence type="ECO:0000255" key="1">
    <source>
        <dbReference type="HAMAP-Rule" id="MF_01850"/>
    </source>
</evidence>
<organism>
    <name type="scientific">Ralstonia nicotianae (strain ATCC BAA-1114 / GMI1000)</name>
    <name type="common">Ralstonia solanacearum</name>
    <dbReference type="NCBI Taxonomy" id="267608"/>
    <lineage>
        <taxon>Bacteria</taxon>
        <taxon>Pseudomonadati</taxon>
        <taxon>Pseudomonadota</taxon>
        <taxon>Betaproteobacteria</taxon>
        <taxon>Burkholderiales</taxon>
        <taxon>Burkholderiaceae</taxon>
        <taxon>Ralstonia</taxon>
        <taxon>Ralstonia solanacearum species complex</taxon>
    </lineage>
</organism>
<accession>Q8Y306</accession>
<protein>
    <recommendedName>
        <fullName evidence="1">tRNA-cytidine(32) 2-sulfurtransferase</fullName>
        <ecNumber evidence="1">2.8.1.-</ecNumber>
    </recommendedName>
    <alternativeName>
        <fullName evidence="1">Two-thiocytidine biosynthesis protein A</fullName>
    </alternativeName>
    <alternativeName>
        <fullName evidence="1">tRNA 2-thiocytidine biosynthesis protein TtcA</fullName>
    </alternativeName>
</protein>
<comment type="function">
    <text evidence="1">Catalyzes the ATP-dependent 2-thiolation of cytidine in position 32 of tRNA, to form 2-thiocytidine (s(2)C32). The sulfur atoms are provided by the cysteine/cysteine desulfurase (IscS) system.</text>
</comment>
<comment type="catalytic activity">
    <reaction evidence="1">
        <text>cytidine(32) in tRNA + S-sulfanyl-L-cysteinyl-[cysteine desulfurase] + AH2 + ATP = 2-thiocytidine(32) in tRNA + L-cysteinyl-[cysteine desulfurase] + A + AMP + diphosphate + H(+)</text>
        <dbReference type="Rhea" id="RHEA:57048"/>
        <dbReference type="Rhea" id="RHEA-COMP:10288"/>
        <dbReference type="Rhea" id="RHEA-COMP:12157"/>
        <dbReference type="Rhea" id="RHEA-COMP:12158"/>
        <dbReference type="Rhea" id="RHEA-COMP:14821"/>
        <dbReference type="ChEBI" id="CHEBI:13193"/>
        <dbReference type="ChEBI" id="CHEBI:15378"/>
        <dbReference type="ChEBI" id="CHEBI:17499"/>
        <dbReference type="ChEBI" id="CHEBI:29950"/>
        <dbReference type="ChEBI" id="CHEBI:30616"/>
        <dbReference type="ChEBI" id="CHEBI:33019"/>
        <dbReference type="ChEBI" id="CHEBI:61963"/>
        <dbReference type="ChEBI" id="CHEBI:82748"/>
        <dbReference type="ChEBI" id="CHEBI:141453"/>
        <dbReference type="ChEBI" id="CHEBI:456215"/>
    </reaction>
    <physiologicalReaction direction="left-to-right" evidence="1">
        <dbReference type="Rhea" id="RHEA:57049"/>
    </physiologicalReaction>
</comment>
<comment type="cofactor">
    <cofactor evidence="1">
        <name>Mg(2+)</name>
        <dbReference type="ChEBI" id="CHEBI:18420"/>
    </cofactor>
</comment>
<comment type="cofactor">
    <cofactor evidence="1">
        <name>[4Fe-4S] cluster</name>
        <dbReference type="ChEBI" id="CHEBI:49883"/>
    </cofactor>
    <text evidence="1">Binds 1 [4Fe-4S] cluster per subunit. The cluster is chelated by three Cys residues, the fourth Fe has a free coordination site that may bind a sulfur atom transferred from the persulfide of IscS.</text>
</comment>
<comment type="pathway">
    <text evidence="1">tRNA modification.</text>
</comment>
<comment type="subunit">
    <text evidence="1">Homodimer.</text>
</comment>
<comment type="subcellular location">
    <subcellularLocation>
        <location evidence="1">Cytoplasm</location>
    </subcellularLocation>
</comment>
<comment type="miscellaneous">
    <text evidence="1">The thiolation reaction likely consists of two steps: a first activation step by ATP to form an adenylated intermediate of the target base of tRNA, and a second nucleophilic substitution step of the sulfur (S) atom supplied by the hydrosulfide attached to the Fe-S cluster.</text>
</comment>
<comment type="similarity">
    <text evidence="1">Belongs to the TtcA family.</text>
</comment>
<sequence length="312" mass="34650">MTFSNNFHRLETRLQSQAGRAIGDFKMIEDGDTVLVCLSGGKDSYTMLSVLMALQKRAPIDFKLIAMNLDQKQPGFPEDVLPGYLKKVGVEYVIVEADTYSIVKEKVPEGKTTCSLCSRLRRGVIYRTAKELGANKIALGHHRDDIVNTFFLNMFFGGKMKAMPPKLATDNGDHIVIRPLAYCAEKEIAAYARAMEFPIIPCNLCGSQENLQRKKVKEMLLEWERQAPGRIDNIFSALQNVVPSHLADTDLFDFNGLTTGLAKIGEEALFGQTAYDQAPLVFAGSHDDRIEFVRFERNPAGKAPEGAEQPAA</sequence>
<dbReference type="EC" id="2.8.1.-" evidence="1"/>
<dbReference type="EMBL" id="AL646052">
    <property type="protein sequence ID" value="CAD13703.1"/>
    <property type="molecule type" value="Genomic_DNA"/>
</dbReference>
<dbReference type="RefSeq" id="WP_011000142.1">
    <property type="nucleotide sequence ID" value="NC_003295.1"/>
</dbReference>
<dbReference type="SMR" id="Q8Y306"/>
<dbReference type="STRING" id="267608.RSc0175"/>
<dbReference type="EnsemblBacteria" id="CAD13703">
    <property type="protein sequence ID" value="CAD13703"/>
    <property type="gene ID" value="RSc0175"/>
</dbReference>
<dbReference type="KEGG" id="rso:RSc0175"/>
<dbReference type="eggNOG" id="COG0037">
    <property type="taxonomic scope" value="Bacteria"/>
</dbReference>
<dbReference type="HOGENOM" id="CLU_026481_0_0_4"/>
<dbReference type="Proteomes" id="UP000001436">
    <property type="component" value="Chromosome"/>
</dbReference>
<dbReference type="GO" id="GO:0005737">
    <property type="term" value="C:cytoplasm"/>
    <property type="evidence" value="ECO:0007669"/>
    <property type="project" value="UniProtKB-SubCell"/>
</dbReference>
<dbReference type="GO" id="GO:0051539">
    <property type="term" value="F:4 iron, 4 sulfur cluster binding"/>
    <property type="evidence" value="ECO:0007669"/>
    <property type="project" value="UniProtKB-UniRule"/>
</dbReference>
<dbReference type="GO" id="GO:0005524">
    <property type="term" value="F:ATP binding"/>
    <property type="evidence" value="ECO:0007669"/>
    <property type="project" value="UniProtKB-UniRule"/>
</dbReference>
<dbReference type="GO" id="GO:0000287">
    <property type="term" value="F:magnesium ion binding"/>
    <property type="evidence" value="ECO:0007669"/>
    <property type="project" value="UniProtKB-UniRule"/>
</dbReference>
<dbReference type="GO" id="GO:0016783">
    <property type="term" value="F:sulfurtransferase activity"/>
    <property type="evidence" value="ECO:0007669"/>
    <property type="project" value="UniProtKB-UniRule"/>
</dbReference>
<dbReference type="GO" id="GO:0000049">
    <property type="term" value="F:tRNA binding"/>
    <property type="evidence" value="ECO:0007669"/>
    <property type="project" value="UniProtKB-KW"/>
</dbReference>
<dbReference type="GO" id="GO:0034227">
    <property type="term" value="P:tRNA thio-modification"/>
    <property type="evidence" value="ECO:0007669"/>
    <property type="project" value="UniProtKB-UniRule"/>
</dbReference>
<dbReference type="CDD" id="cd24138">
    <property type="entry name" value="TtcA-like"/>
    <property type="match status" value="1"/>
</dbReference>
<dbReference type="Gene3D" id="3.40.50.620">
    <property type="entry name" value="HUPs"/>
    <property type="match status" value="1"/>
</dbReference>
<dbReference type="HAMAP" id="MF_01850">
    <property type="entry name" value="TtcA"/>
    <property type="match status" value="1"/>
</dbReference>
<dbReference type="InterPro" id="IPR014729">
    <property type="entry name" value="Rossmann-like_a/b/a_fold"/>
</dbReference>
<dbReference type="InterPro" id="IPR011063">
    <property type="entry name" value="TilS/TtcA_N"/>
</dbReference>
<dbReference type="InterPro" id="IPR012089">
    <property type="entry name" value="tRNA_Cyd_32_2_STrfase"/>
</dbReference>
<dbReference type="NCBIfam" id="NF007972">
    <property type="entry name" value="PRK10696.1"/>
    <property type="match status" value="1"/>
</dbReference>
<dbReference type="PANTHER" id="PTHR43686:SF1">
    <property type="entry name" value="AMINOTRAN_5 DOMAIN-CONTAINING PROTEIN"/>
    <property type="match status" value="1"/>
</dbReference>
<dbReference type="PANTHER" id="PTHR43686">
    <property type="entry name" value="SULFURTRANSFERASE-RELATED"/>
    <property type="match status" value="1"/>
</dbReference>
<dbReference type="Pfam" id="PF01171">
    <property type="entry name" value="ATP_bind_3"/>
    <property type="match status" value="1"/>
</dbReference>
<dbReference type="SUPFAM" id="SSF52402">
    <property type="entry name" value="Adenine nucleotide alpha hydrolases-like"/>
    <property type="match status" value="1"/>
</dbReference>
<name>TTCA_RALN1</name>
<gene>
    <name evidence="1" type="primary">ttcA</name>
    <name type="ordered locus">RSc0175</name>
</gene>
<keyword id="KW-0004">4Fe-4S</keyword>
<keyword id="KW-0067">ATP-binding</keyword>
<keyword id="KW-0963">Cytoplasm</keyword>
<keyword id="KW-0408">Iron</keyword>
<keyword id="KW-0411">Iron-sulfur</keyword>
<keyword id="KW-0460">Magnesium</keyword>
<keyword id="KW-0479">Metal-binding</keyword>
<keyword id="KW-0547">Nucleotide-binding</keyword>
<keyword id="KW-1185">Reference proteome</keyword>
<keyword id="KW-0694">RNA-binding</keyword>
<keyword id="KW-0808">Transferase</keyword>
<keyword id="KW-0819">tRNA processing</keyword>
<keyword id="KW-0820">tRNA-binding</keyword>